<feature type="chain" id="PRO_0000223952" description="C-myc promoter-binding protein">
    <location>
        <begin position="1"/>
        <end position="1863"/>
    </location>
</feature>
<feature type="domain" description="MABP" evidence="3">
    <location>
        <begin position="42"/>
        <end position="200"/>
    </location>
</feature>
<feature type="domain" description="uDENN" evidence="2">
    <location>
        <begin position="192"/>
        <end position="364"/>
    </location>
</feature>
<feature type="domain" description="cDENN" evidence="2">
    <location>
        <begin position="385"/>
        <end position="521"/>
    </location>
</feature>
<feature type="domain" description="dDENN" evidence="2">
    <location>
        <begin position="523"/>
        <end position="641"/>
    </location>
</feature>
<feature type="repeat" description="PPR 1">
    <location>
        <begin position="772"/>
        <end position="808"/>
    </location>
</feature>
<feature type="repeat" description="PPR 2">
    <location>
        <begin position="809"/>
        <end position="843"/>
    </location>
</feature>
<feature type="region of interest" description="Disordered" evidence="4">
    <location>
        <begin position="905"/>
        <end position="952"/>
    </location>
</feature>
<feature type="region of interest" description="Disordered" evidence="4">
    <location>
        <begin position="1075"/>
        <end position="1111"/>
    </location>
</feature>
<feature type="region of interest" description="Disordered" evidence="4">
    <location>
        <begin position="1177"/>
        <end position="1202"/>
    </location>
</feature>
<feature type="region of interest" description="Disordered" evidence="4">
    <location>
        <begin position="1237"/>
        <end position="1306"/>
    </location>
</feature>
<feature type="region of interest" description="Disordered" evidence="4">
    <location>
        <begin position="1348"/>
        <end position="1375"/>
    </location>
</feature>
<feature type="short sequence motif" description="Bipartite nuclear localization signal" evidence="1">
    <location>
        <begin position="917"/>
        <end position="933"/>
    </location>
</feature>
<feature type="compositionally biased region" description="Basic and acidic residues" evidence="4">
    <location>
        <begin position="912"/>
        <end position="921"/>
    </location>
</feature>
<feature type="compositionally biased region" description="Low complexity" evidence="4">
    <location>
        <begin position="936"/>
        <end position="949"/>
    </location>
</feature>
<feature type="compositionally biased region" description="Basic and acidic residues" evidence="4">
    <location>
        <begin position="1269"/>
        <end position="1279"/>
    </location>
</feature>
<feature type="compositionally biased region" description="Polar residues" evidence="4">
    <location>
        <begin position="1297"/>
        <end position="1306"/>
    </location>
</feature>
<feature type="compositionally biased region" description="Polar residues" evidence="4">
    <location>
        <begin position="1348"/>
        <end position="1371"/>
    </location>
</feature>
<feature type="modified residue" description="Phosphoserine" evidence="11 13">
    <location>
        <position position="731"/>
    </location>
</feature>
<feature type="modified residue" description="Phosphoserine" evidence="13">
    <location>
        <position position="1015"/>
    </location>
</feature>
<feature type="modified residue" description="Phosphoserine" evidence="12 13">
    <location>
        <position position="1035"/>
    </location>
</feature>
<feature type="modified residue" description="Phosphoserine" evidence="13">
    <location>
        <position position="1099"/>
    </location>
</feature>
<feature type="modified residue" description="Phosphoserine" evidence="13">
    <location>
        <position position="1151"/>
    </location>
</feature>
<feature type="modified residue" description="Phosphoserine" evidence="13">
    <location>
        <position position="1152"/>
    </location>
</feature>
<feature type="modified residue" description="Phosphoserine" evidence="13">
    <location>
        <position position="1225"/>
    </location>
</feature>
<feature type="modified residue" description="Phosphoserine" evidence="13">
    <location>
        <position position="1240"/>
    </location>
</feature>
<feature type="modified residue" description="Phosphoserine" evidence="13">
    <location>
        <position position="1251"/>
    </location>
</feature>
<feature type="modified residue" description="Phosphoserine" evidence="13">
    <location>
        <position position="1281"/>
    </location>
</feature>
<feature type="modified residue" description="Phosphoserine" evidence="13">
    <location>
        <position position="1508"/>
    </location>
</feature>
<feature type="modified residue" description="Phosphoserine" evidence="11 13">
    <location>
        <position position="1587"/>
    </location>
</feature>
<feature type="modified residue" description="Phosphoserine" evidence="13">
    <location>
        <position position="1589"/>
    </location>
</feature>
<feature type="modified residue" description="Phosphoserine" evidence="13">
    <location>
        <position position="1591"/>
    </location>
</feature>
<feature type="splice variant" id="VSP_044630" description="In isoform 2." evidence="9">
    <original>S</original>
    <variation>SDGSDLDAVSHGSMDSGHGTHTVEQAPFNTGLIKVYATDDRSST</variation>
    <location>
        <position position="900"/>
    </location>
</feature>
<feature type="sequence variant" id="VAR_025362" description="In dbSNP:rs17854146." evidence="6">
    <original>L</original>
    <variation>P</variation>
    <location>
        <position position="284"/>
    </location>
</feature>
<feature type="sequence conflict" description="In Ref. 2; AL833317." evidence="10" ref="2">
    <original>S</original>
    <variation>P</variation>
    <location>
        <position position="256"/>
    </location>
</feature>
<feature type="sequence conflict" description="In Ref. 2; CAD89960." evidence="10" ref="2">
    <original>S</original>
    <variation>P</variation>
    <location>
        <position position="383"/>
    </location>
</feature>
<feature type="sequence conflict" description="In Ref. 1; AAQ10514." evidence="10" ref="1">
    <original>M</original>
    <variation>MGK</variation>
    <location>
        <position position="983"/>
    </location>
</feature>
<feature type="sequence conflict" description="In Ref. 2; AL833317." evidence="10" ref="2">
    <original>T</original>
    <variation>A</variation>
    <location>
        <position position="1532"/>
    </location>
</feature>
<feature type="sequence conflict" description="In Ref. 2; AL833317." evidence="10" ref="2">
    <original>K</original>
    <variation>Q</variation>
    <location>
        <position position="1726"/>
    </location>
</feature>
<name>MYCPP_HUMAN</name>
<dbReference type="EMBL" id="AF534403">
    <property type="protein sequence ID" value="AAQ10514.1"/>
    <property type="molecule type" value="mRNA"/>
</dbReference>
<dbReference type="EMBL" id="AL832602">
    <property type="protein sequence ID" value="CAD89960.1"/>
    <property type="molecule type" value="mRNA"/>
</dbReference>
<dbReference type="EMBL" id="AL833317">
    <property type="status" value="NOT_ANNOTATED_CDS"/>
    <property type="molecule type" value="mRNA"/>
</dbReference>
<dbReference type="EMBL" id="AC011939">
    <property type="status" value="NOT_ANNOTATED_CDS"/>
    <property type="molecule type" value="Genomic_DNA"/>
</dbReference>
<dbReference type="EMBL" id="BC041706">
    <property type="protein sequence ID" value="AAH41706.1"/>
    <property type="molecule type" value="mRNA"/>
</dbReference>
<dbReference type="EMBL" id="AK091368">
    <property type="protein sequence ID" value="BAC03648.1"/>
    <property type="molecule type" value="mRNA"/>
</dbReference>
<dbReference type="EMBL" id="X63417">
    <property type="protein sequence ID" value="CAA45013.1"/>
    <property type="molecule type" value="mRNA"/>
</dbReference>
<dbReference type="CCDS" id="CCDS45285.1">
    <molecule id="Q7Z401-1"/>
</dbReference>
<dbReference type="PIR" id="I37904">
    <property type="entry name" value="I37904"/>
</dbReference>
<dbReference type="RefSeq" id="NP_001138295.1">
    <molecule id="Q7Z401-2"/>
    <property type="nucleotide sequence ID" value="NM_001144823.2"/>
</dbReference>
<dbReference type="RefSeq" id="NP_001363848.1">
    <molecule id="Q7Z401-1"/>
    <property type="nucleotide sequence ID" value="NM_001376919.1"/>
</dbReference>
<dbReference type="RefSeq" id="NP_001363849.1">
    <molecule id="Q7Z401-1"/>
    <property type="nucleotide sequence ID" value="NM_001376920.1"/>
</dbReference>
<dbReference type="RefSeq" id="NP_005839.3">
    <molecule id="Q7Z401-1"/>
    <property type="nucleotide sequence ID" value="NM_005848.4"/>
</dbReference>
<dbReference type="RefSeq" id="XP_005254178.1">
    <property type="nucleotide sequence ID" value="XM_005254121.3"/>
</dbReference>
<dbReference type="RefSeq" id="XP_016877352.1">
    <property type="nucleotide sequence ID" value="XM_017021863.1"/>
</dbReference>
<dbReference type="RefSeq" id="XP_047288051.1">
    <molecule id="Q7Z401-2"/>
    <property type="nucleotide sequence ID" value="XM_047432095.1"/>
</dbReference>
<dbReference type="RefSeq" id="XP_047288052.1">
    <molecule id="Q7Z401-2"/>
    <property type="nucleotide sequence ID" value="XM_047432096.1"/>
</dbReference>
<dbReference type="RefSeq" id="XP_047288053.1">
    <molecule id="Q7Z401-2"/>
    <property type="nucleotide sequence ID" value="XM_047432097.1"/>
</dbReference>
<dbReference type="RefSeq" id="XP_047288058.1">
    <molecule id="Q7Z401-1"/>
    <property type="nucleotide sequence ID" value="XM_047432102.1"/>
</dbReference>
<dbReference type="RefSeq" id="XP_047288059.1">
    <molecule id="Q7Z401-1"/>
    <property type="nucleotide sequence ID" value="XM_047432103.1"/>
</dbReference>
<dbReference type="RefSeq" id="XP_047288060.1">
    <molecule id="Q7Z401-1"/>
    <property type="nucleotide sequence ID" value="XM_047432104.1"/>
</dbReference>
<dbReference type="RefSeq" id="XP_054233162.1">
    <molecule id="Q7Z401-2"/>
    <property type="nucleotide sequence ID" value="XM_054377187.1"/>
</dbReference>
<dbReference type="RefSeq" id="XP_054233163.1">
    <molecule id="Q7Z401-2"/>
    <property type="nucleotide sequence ID" value="XM_054377188.1"/>
</dbReference>
<dbReference type="RefSeq" id="XP_054233164.1">
    <molecule id="Q7Z401-2"/>
    <property type="nucleotide sequence ID" value="XM_054377189.1"/>
</dbReference>
<dbReference type="RefSeq" id="XP_054233169.1">
    <molecule id="Q7Z401-1"/>
    <property type="nucleotide sequence ID" value="XM_054377194.1"/>
</dbReference>
<dbReference type="RefSeq" id="XP_054233170.1">
    <molecule id="Q7Z401-1"/>
    <property type="nucleotide sequence ID" value="XM_054377195.1"/>
</dbReference>
<dbReference type="RefSeq" id="XP_054233171.1">
    <molecule id="Q7Z401-1"/>
    <property type="nucleotide sequence ID" value="XM_054377196.1"/>
</dbReference>
<dbReference type="SMR" id="Q7Z401"/>
<dbReference type="BioGRID" id="115552">
    <property type="interactions" value="93"/>
</dbReference>
<dbReference type="FunCoup" id="Q7Z401">
    <property type="interactions" value="3013"/>
</dbReference>
<dbReference type="IntAct" id="Q7Z401">
    <property type="interactions" value="40"/>
</dbReference>
<dbReference type="MINT" id="Q7Z401"/>
<dbReference type="STRING" id="9606.ENSP00000391167"/>
<dbReference type="GlyGen" id="Q7Z401">
    <property type="glycosylation" value="4 sites, 1 N-linked glycan (1 site), 1 O-linked glycan (1 site)"/>
</dbReference>
<dbReference type="iPTMnet" id="Q7Z401"/>
<dbReference type="PhosphoSitePlus" id="Q7Z401"/>
<dbReference type="BioMuta" id="DENND4A"/>
<dbReference type="DMDM" id="88909230"/>
<dbReference type="jPOST" id="Q7Z401"/>
<dbReference type="MassIVE" id="Q7Z401"/>
<dbReference type="PaxDb" id="9606-ENSP00000391167"/>
<dbReference type="PeptideAtlas" id="Q7Z401"/>
<dbReference type="ProteomicsDB" id="17383"/>
<dbReference type="ProteomicsDB" id="69104">
    <molecule id="Q7Z401-1"/>
</dbReference>
<dbReference type="Pumba" id="Q7Z401"/>
<dbReference type="Antibodypedia" id="26036">
    <property type="antibodies" value="39 antibodies from 16 providers"/>
</dbReference>
<dbReference type="DNASU" id="10260"/>
<dbReference type="Ensembl" id="ENST00000431932.6">
    <molecule id="Q7Z401-1"/>
    <property type="protein sequence ID" value="ENSP00000396830.2"/>
    <property type="gene ID" value="ENSG00000174485.16"/>
</dbReference>
<dbReference type="GeneID" id="10260"/>
<dbReference type="KEGG" id="hsa:10260"/>
<dbReference type="UCSC" id="uc002aph.4">
    <molecule id="Q7Z401-1"/>
    <property type="organism name" value="human"/>
</dbReference>
<dbReference type="AGR" id="HGNC:24321"/>
<dbReference type="CTD" id="10260"/>
<dbReference type="DisGeNET" id="10260"/>
<dbReference type="GeneCards" id="DENND4A"/>
<dbReference type="HGNC" id="HGNC:24321">
    <property type="gene designation" value="DENND4A"/>
</dbReference>
<dbReference type="HPA" id="ENSG00000174485">
    <property type="expression patterns" value="Tissue enhanced (retina)"/>
</dbReference>
<dbReference type="MIM" id="600382">
    <property type="type" value="gene"/>
</dbReference>
<dbReference type="neXtProt" id="NX_Q7Z401"/>
<dbReference type="OpenTargets" id="ENSG00000174485"/>
<dbReference type="PharmGKB" id="PA134887513"/>
<dbReference type="VEuPathDB" id="HostDB:ENSG00000174485"/>
<dbReference type="eggNOG" id="KOG2127">
    <property type="taxonomic scope" value="Eukaryota"/>
</dbReference>
<dbReference type="GeneTree" id="ENSGT00940000155836"/>
<dbReference type="HOGENOM" id="CLU_003074_0_0_1"/>
<dbReference type="InParanoid" id="Q7Z401"/>
<dbReference type="OrthoDB" id="75250at2759"/>
<dbReference type="PAN-GO" id="Q7Z401">
    <property type="GO annotations" value="2 GO annotations based on evolutionary models"/>
</dbReference>
<dbReference type="PhylomeDB" id="Q7Z401"/>
<dbReference type="TreeFam" id="TF313237"/>
<dbReference type="PathwayCommons" id="Q7Z401"/>
<dbReference type="Reactome" id="R-HSA-8876198">
    <property type="pathway name" value="RAB GEFs exchange GTP for GDP on RABs"/>
</dbReference>
<dbReference type="SignaLink" id="Q7Z401"/>
<dbReference type="BioGRID-ORCS" id="10260">
    <property type="hits" value="33 hits in 1165 CRISPR screens"/>
</dbReference>
<dbReference type="ChiTaRS" id="DENND4A">
    <property type="organism name" value="human"/>
</dbReference>
<dbReference type="GeneWiki" id="DENND4A"/>
<dbReference type="GenomeRNAi" id="10260"/>
<dbReference type="Pharos" id="Q7Z401">
    <property type="development level" value="Tbio"/>
</dbReference>
<dbReference type="PRO" id="PR:Q7Z401"/>
<dbReference type="Proteomes" id="UP000005640">
    <property type="component" value="Chromosome 15"/>
</dbReference>
<dbReference type="RNAct" id="Q7Z401">
    <property type="molecule type" value="protein"/>
</dbReference>
<dbReference type="Bgee" id="ENSG00000174485">
    <property type="expression patterns" value="Expressed in calcaneal tendon and 157 other cell types or tissues"/>
</dbReference>
<dbReference type="ExpressionAtlas" id="Q7Z401">
    <property type="expression patterns" value="baseline and differential"/>
</dbReference>
<dbReference type="GO" id="GO:0031410">
    <property type="term" value="C:cytoplasmic vesicle"/>
    <property type="evidence" value="ECO:0000318"/>
    <property type="project" value="GO_Central"/>
</dbReference>
<dbReference type="GO" id="GO:0005829">
    <property type="term" value="C:cytosol"/>
    <property type="evidence" value="ECO:0000304"/>
    <property type="project" value="Reactome"/>
</dbReference>
<dbReference type="GO" id="GO:0005634">
    <property type="term" value="C:nucleus"/>
    <property type="evidence" value="ECO:0007669"/>
    <property type="project" value="UniProtKB-SubCell"/>
</dbReference>
<dbReference type="GO" id="GO:0003677">
    <property type="term" value="F:DNA binding"/>
    <property type="evidence" value="ECO:0000303"/>
    <property type="project" value="UniProtKB"/>
</dbReference>
<dbReference type="GO" id="GO:0005085">
    <property type="term" value="F:guanyl-nucleotide exchange factor activity"/>
    <property type="evidence" value="ECO:0000314"/>
    <property type="project" value="UniProtKB"/>
</dbReference>
<dbReference type="GO" id="GO:0006355">
    <property type="term" value="P:regulation of DNA-templated transcription"/>
    <property type="evidence" value="ECO:0000303"/>
    <property type="project" value="UniProtKB"/>
</dbReference>
<dbReference type="GO" id="GO:0032483">
    <property type="term" value="P:regulation of Rab protein signal transduction"/>
    <property type="evidence" value="ECO:0000318"/>
    <property type="project" value="GO_Central"/>
</dbReference>
<dbReference type="FunFam" id="1.25.40.10:FF:000042">
    <property type="entry name" value="C-myc promoter-binding protein isoform X1"/>
    <property type="match status" value="1"/>
</dbReference>
<dbReference type="FunFam" id="2.100.10.50:FF:000001">
    <property type="entry name" value="DENN domain containing 4C"/>
    <property type="match status" value="1"/>
</dbReference>
<dbReference type="Gene3D" id="2.100.10.50">
    <property type="match status" value="1"/>
</dbReference>
<dbReference type="Gene3D" id="3.40.50.11500">
    <property type="match status" value="1"/>
</dbReference>
<dbReference type="Gene3D" id="1.25.40.10">
    <property type="entry name" value="Tetratricopeptide repeat domain"/>
    <property type="match status" value="1"/>
</dbReference>
<dbReference type="InterPro" id="IPR001194">
    <property type="entry name" value="cDENN_dom"/>
</dbReference>
<dbReference type="InterPro" id="IPR005112">
    <property type="entry name" value="dDENN_dom"/>
</dbReference>
<dbReference type="InterPro" id="IPR043153">
    <property type="entry name" value="DENN_C"/>
</dbReference>
<dbReference type="InterPro" id="IPR051696">
    <property type="entry name" value="DENN_Domain_GEFs"/>
</dbReference>
<dbReference type="InterPro" id="IPR023341">
    <property type="entry name" value="MABP"/>
</dbReference>
<dbReference type="InterPro" id="IPR002885">
    <property type="entry name" value="Pentatricopeptide_rpt"/>
</dbReference>
<dbReference type="InterPro" id="IPR011990">
    <property type="entry name" value="TPR-like_helical_dom_sf"/>
</dbReference>
<dbReference type="InterPro" id="IPR037516">
    <property type="entry name" value="Tripartite_DENN"/>
</dbReference>
<dbReference type="InterPro" id="IPR005113">
    <property type="entry name" value="uDENN_dom"/>
</dbReference>
<dbReference type="NCBIfam" id="TIGR00756">
    <property type="entry name" value="PPR"/>
    <property type="match status" value="1"/>
</dbReference>
<dbReference type="PANTHER" id="PTHR12296:SF16">
    <property type="entry name" value="C-MYC PROMOTER-BINDING PROTEIN"/>
    <property type="match status" value="1"/>
</dbReference>
<dbReference type="PANTHER" id="PTHR12296">
    <property type="entry name" value="DENN DOMAIN-CONTAINING PROTEIN 4"/>
    <property type="match status" value="1"/>
</dbReference>
<dbReference type="Pfam" id="PF03455">
    <property type="entry name" value="dDENN"/>
    <property type="match status" value="1"/>
</dbReference>
<dbReference type="Pfam" id="PF02141">
    <property type="entry name" value="DENN"/>
    <property type="match status" value="1"/>
</dbReference>
<dbReference type="Pfam" id="PF03456">
    <property type="entry name" value="uDENN"/>
    <property type="match status" value="1"/>
</dbReference>
<dbReference type="SMART" id="SM00801">
    <property type="entry name" value="dDENN"/>
    <property type="match status" value="1"/>
</dbReference>
<dbReference type="SMART" id="SM00799">
    <property type="entry name" value="DENN"/>
    <property type="match status" value="1"/>
</dbReference>
<dbReference type="SMART" id="SM00800">
    <property type="entry name" value="uDENN"/>
    <property type="match status" value="1"/>
</dbReference>
<dbReference type="PROSITE" id="PS50211">
    <property type="entry name" value="DENN"/>
    <property type="match status" value="1"/>
</dbReference>
<dbReference type="PROSITE" id="PS51498">
    <property type="entry name" value="MABP"/>
    <property type="match status" value="1"/>
</dbReference>
<dbReference type="PROSITE" id="PS51375">
    <property type="entry name" value="PPR"/>
    <property type="match status" value="1"/>
</dbReference>
<gene>
    <name type="primary">DENND4A</name>
    <name type="synonym">IRLB</name>
    <name type="synonym">MYCPBP</name>
</gene>
<evidence type="ECO:0000255" key="1"/>
<evidence type="ECO:0000255" key="2">
    <source>
        <dbReference type="PROSITE-ProRule" id="PRU00304"/>
    </source>
</evidence>
<evidence type="ECO:0000255" key="3">
    <source>
        <dbReference type="PROSITE-ProRule" id="PRU00831"/>
    </source>
</evidence>
<evidence type="ECO:0000256" key="4">
    <source>
        <dbReference type="SAM" id="MobiDB-lite"/>
    </source>
</evidence>
<evidence type="ECO:0000269" key="5">
    <source>
    </source>
</evidence>
<evidence type="ECO:0000269" key="6">
    <source>
    </source>
</evidence>
<evidence type="ECO:0000269" key="7">
    <source>
    </source>
</evidence>
<evidence type="ECO:0000269" key="8">
    <source>
    </source>
</evidence>
<evidence type="ECO:0000303" key="9">
    <source>
    </source>
</evidence>
<evidence type="ECO:0000305" key="10"/>
<evidence type="ECO:0007744" key="11">
    <source>
    </source>
</evidence>
<evidence type="ECO:0007744" key="12">
    <source>
    </source>
</evidence>
<evidence type="ECO:0007744" key="13">
    <source>
    </source>
</evidence>
<reference key="1">
    <citation type="journal article" date="2003" name="Genomics">
        <title>Molecular cloning, structural analysis, and expression of a human IRLB, MYC promoter-binding protein: new DENN domain-containing protein family emerges.</title>
        <authorList>
            <person name="Semova N."/>
            <person name="Kapanadze B."/>
            <person name="Corcoran M."/>
            <person name="Kutsenko A."/>
            <person name="Baranova A."/>
            <person name="Semov A."/>
        </authorList>
    </citation>
    <scope>NUCLEOTIDE SEQUENCE [MRNA] (ISOFORM 1)</scope>
    <scope>TISSUE SPECIFICITY</scope>
    <scope>DEVELOPMENTAL STAGE</scope>
    <scope>INDUCTION</scope>
</reference>
<reference key="2">
    <citation type="journal article" date="2007" name="BMC Genomics">
        <title>The full-ORF clone resource of the German cDNA consortium.</title>
        <authorList>
            <person name="Bechtel S."/>
            <person name="Rosenfelder H."/>
            <person name="Duda A."/>
            <person name="Schmidt C.P."/>
            <person name="Ernst U."/>
            <person name="Wellenreuther R."/>
            <person name="Mehrle A."/>
            <person name="Schuster C."/>
            <person name="Bahr A."/>
            <person name="Bloecker H."/>
            <person name="Heubner D."/>
            <person name="Hoerlein A."/>
            <person name="Michel G."/>
            <person name="Wedler H."/>
            <person name="Koehrer K."/>
            <person name="Ottenwaelder B."/>
            <person name="Poustka A."/>
            <person name="Wiemann S."/>
            <person name="Schupp I."/>
        </authorList>
    </citation>
    <scope>NUCLEOTIDE SEQUENCE [LARGE SCALE MRNA] (ISOFORM 2)</scope>
    <scope>NUCLEOTIDE SEQUENCE [LARGE SCALE MRNA] OF 33-1863 (ISOFORM 1)</scope>
    <source>
        <tissue>Bone marrow</tissue>
        <tissue>Spinal cord</tissue>
    </source>
</reference>
<reference key="3">
    <citation type="journal article" date="2006" name="Nature">
        <title>Analysis of the DNA sequence and duplication history of human chromosome 15.</title>
        <authorList>
            <person name="Zody M.C."/>
            <person name="Garber M."/>
            <person name="Sharpe T."/>
            <person name="Young S.K."/>
            <person name="Rowen L."/>
            <person name="O'Neill K."/>
            <person name="Whittaker C.A."/>
            <person name="Kamal M."/>
            <person name="Chang J.L."/>
            <person name="Cuomo C.A."/>
            <person name="Dewar K."/>
            <person name="FitzGerald M.G."/>
            <person name="Kodira C.D."/>
            <person name="Madan A."/>
            <person name="Qin S."/>
            <person name="Yang X."/>
            <person name="Abbasi N."/>
            <person name="Abouelleil A."/>
            <person name="Arachchi H.M."/>
            <person name="Baradarani L."/>
            <person name="Birditt B."/>
            <person name="Bloom S."/>
            <person name="Bloom T."/>
            <person name="Borowsky M.L."/>
            <person name="Burke J."/>
            <person name="Butler J."/>
            <person name="Cook A."/>
            <person name="DeArellano K."/>
            <person name="DeCaprio D."/>
            <person name="Dorris L. III"/>
            <person name="Dors M."/>
            <person name="Eichler E.E."/>
            <person name="Engels R."/>
            <person name="Fahey J."/>
            <person name="Fleetwood P."/>
            <person name="Friedman C."/>
            <person name="Gearin G."/>
            <person name="Hall J.L."/>
            <person name="Hensley G."/>
            <person name="Johnson E."/>
            <person name="Jones C."/>
            <person name="Kamat A."/>
            <person name="Kaur A."/>
            <person name="Locke D.P."/>
            <person name="Madan A."/>
            <person name="Munson G."/>
            <person name="Jaffe D.B."/>
            <person name="Lui A."/>
            <person name="Macdonald P."/>
            <person name="Mauceli E."/>
            <person name="Naylor J.W."/>
            <person name="Nesbitt R."/>
            <person name="Nicol R."/>
            <person name="O'Leary S.B."/>
            <person name="Ratcliffe A."/>
            <person name="Rounsley S."/>
            <person name="She X."/>
            <person name="Sneddon K.M.B."/>
            <person name="Stewart S."/>
            <person name="Sougnez C."/>
            <person name="Stone S.M."/>
            <person name="Topham K."/>
            <person name="Vincent D."/>
            <person name="Wang S."/>
            <person name="Zimmer A.R."/>
            <person name="Birren B.W."/>
            <person name="Hood L."/>
            <person name="Lander E.S."/>
            <person name="Nusbaum C."/>
        </authorList>
    </citation>
    <scope>NUCLEOTIDE SEQUENCE [LARGE SCALE GENOMIC DNA]</scope>
</reference>
<reference key="4">
    <citation type="journal article" date="2004" name="Genome Res.">
        <title>The status, quality, and expansion of the NIH full-length cDNA project: the Mammalian Gene Collection (MGC).</title>
        <authorList>
            <consortium name="The MGC Project Team"/>
        </authorList>
    </citation>
    <scope>NUCLEOTIDE SEQUENCE [LARGE SCALE MRNA] (ISOFORM 1)</scope>
    <scope>VARIANT PRO-284</scope>
    <source>
        <tissue>Uterus</tissue>
    </source>
</reference>
<reference key="5">
    <citation type="journal article" date="2004" name="Nat. Genet.">
        <title>Complete sequencing and characterization of 21,243 full-length human cDNAs.</title>
        <authorList>
            <person name="Ota T."/>
            <person name="Suzuki Y."/>
            <person name="Nishikawa T."/>
            <person name="Otsuki T."/>
            <person name="Sugiyama T."/>
            <person name="Irie R."/>
            <person name="Wakamatsu A."/>
            <person name="Hayashi K."/>
            <person name="Sato H."/>
            <person name="Nagai K."/>
            <person name="Kimura K."/>
            <person name="Makita H."/>
            <person name="Sekine M."/>
            <person name="Obayashi M."/>
            <person name="Nishi T."/>
            <person name="Shibahara T."/>
            <person name="Tanaka T."/>
            <person name="Ishii S."/>
            <person name="Yamamoto J."/>
            <person name="Saito K."/>
            <person name="Kawai Y."/>
            <person name="Isono Y."/>
            <person name="Nakamura Y."/>
            <person name="Nagahari K."/>
            <person name="Murakami K."/>
            <person name="Yasuda T."/>
            <person name="Iwayanagi T."/>
            <person name="Wagatsuma M."/>
            <person name="Shiratori A."/>
            <person name="Sudo H."/>
            <person name="Hosoiri T."/>
            <person name="Kaku Y."/>
            <person name="Kodaira H."/>
            <person name="Kondo H."/>
            <person name="Sugawara M."/>
            <person name="Takahashi M."/>
            <person name="Kanda K."/>
            <person name="Yokoi T."/>
            <person name="Furuya T."/>
            <person name="Kikkawa E."/>
            <person name="Omura Y."/>
            <person name="Abe K."/>
            <person name="Kamihara K."/>
            <person name="Katsuta N."/>
            <person name="Sato K."/>
            <person name="Tanikawa M."/>
            <person name="Yamazaki M."/>
            <person name="Ninomiya K."/>
            <person name="Ishibashi T."/>
            <person name="Yamashita H."/>
            <person name="Murakawa K."/>
            <person name="Fujimori K."/>
            <person name="Tanai H."/>
            <person name="Kimata M."/>
            <person name="Watanabe M."/>
            <person name="Hiraoka S."/>
            <person name="Chiba Y."/>
            <person name="Ishida S."/>
            <person name="Ono Y."/>
            <person name="Takiguchi S."/>
            <person name="Watanabe S."/>
            <person name="Yosida M."/>
            <person name="Hotuta T."/>
            <person name="Kusano J."/>
            <person name="Kanehori K."/>
            <person name="Takahashi-Fujii A."/>
            <person name="Hara H."/>
            <person name="Tanase T.-O."/>
            <person name="Nomura Y."/>
            <person name="Togiya S."/>
            <person name="Komai F."/>
            <person name="Hara R."/>
            <person name="Takeuchi K."/>
            <person name="Arita M."/>
            <person name="Imose N."/>
            <person name="Musashino K."/>
            <person name="Yuuki H."/>
            <person name="Oshima A."/>
            <person name="Sasaki N."/>
            <person name="Aotsuka S."/>
            <person name="Yoshikawa Y."/>
            <person name="Matsunawa H."/>
            <person name="Ichihara T."/>
            <person name="Shiohata N."/>
            <person name="Sano S."/>
            <person name="Moriya S."/>
            <person name="Momiyama H."/>
            <person name="Satoh N."/>
            <person name="Takami S."/>
            <person name="Terashima Y."/>
            <person name="Suzuki O."/>
            <person name="Nakagawa S."/>
            <person name="Senoh A."/>
            <person name="Mizoguchi H."/>
            <person name="Goto Y."/>
            <person name="Shimizu F."/>
            <person name="Wakebe H."/>
            <person name="Hishigaki H."/>
            <person name="Watanabe T."/>
            <person name="Sugiyama A."/>
            <person name="Takemoto M."/>
            <person name="Kawakami B."/>
            <person name="Yamazaki M."/>
            <person name="Watanabe K."/>
            <person name="Kumagai A."/>
            <person name="Itakura S."/>
            <person name="Fukuzumi Y."/>
            <person name="Fujimori Y."/>
            <person name="Komiyama M."/>
            <person name="Tashiro H."/>
            <person name="Tanigami A."/>
            <person name="Fujiwara T."/>
            <person name="Ono T."/>
            <person name="Yamada K."/>
            <person name="Fujii Y."/>
            <person name="Ozaki K."/>
            <person name="Hirao M."/>
            <person name="Ohmori Y."/>
            <person name="Kawabata A."/>
            <person name="Hikiji T."/>
            <person name="Kobatake N."/>
            <person name="Inagaki H."/>
            <person name="Ikema Y."/>
            <person name="Okamoto S."/>
            <person name="Okitani R."/>
            <person name="Kawakami T."/>
            <person name="Noguchi S."/>
            <person name="Itoh T."/>
            <person name="Shigeta K."/>
            <person name="Senba T."/>
            <person name="Matsumura K."/>
            <person name="Nakajima Y."/>
            <person name="Mizuno T."/>
            <person name="Morinaga M."/>
            <person name="Sasaki M."/>
            <person name="Togashi T."/>
            <person name="Oyama M."/>
            <person name="Hata H."/>
            <person name="Watanabe M."/>
            <person name="Komatsu T."/>
            <person name="Mizushima-Sugano J."/>
            <person name="Satoh T."/>
            <person name="Shirai Y."/>
            <person name="Takahashi Y."/>
            <person name="Nakagawa K."/>
            <person name="Okumura K."/>
            <person name="Nagase T."/>
            <person name="Nomura N."/>
            <person name="Kikuchi H."/>
            <person name="Masuho Y."/>
            <person name="Yamashita R."/>
            <person name="Nakai K."/>
            <person name="Yada T."/>
            <person name="Nakamura Y."/>
            <person name="Ohara O."/>
            <person name="Isogai T."/>
            <person name="Sugano S."/>
        </authorList>
    </citation>
    <scope>NUCLEOTIDE SEQUENCE [LARGE SCALE MRNA] OF 1-928 (ISOFORM 1)</scope>
    <source>
        <tissue>Brain</tissue>
    </source>
</reference>
<reference key="6">
    <citation type="journal article" date="1994" name="Gene">
        <title>Cloning of a cDNA encoding a human protein which binds a sequence in the c-myc gene similar to the interferon-stimulated response element.</title>
        <authorList>
            <person name="Stasiv Y.Z."/>
            <person name="Mashkova T.D."/>
            <person name="Chernov B.K."/>
            <person name="Sokolava I.V."/>
            <person name="Itkes A.V."/>
            <person name="Kisselev L.L."/>
        </authorList>
    </citation>
    <scope>NUCLEOTIDE SEQUENCE [MRNA] OF 1673-1863 (ISOFORM 1)</scope>
    <scope>FUNCTION</scope>
</reference>
<reference key="7">
    <citation type="journal article" date="2008" name="J. Proteome Res.">
        <title>Combining protein-based IMAC, peptide-based IMAC, and MudPIT for efficient phosphoproteomic analysis.</title>
        <authorList>
            <person name="Cantin G.T."/>
            <person name="Yi W."/>
            <person name="Lu B."/>
            <person name="Park S.K."/>
            <person name="Xu T."/>
            <person name="Lee J.-D."/>
            <person name="Yates J.R. III"/>
        </authorList>
    </citation>
    <scope>IDENTIFICATION BY MASS SPECTROMETRY [LARGE SCALE ANALYSIS]</scope>
    <source>
        <tissue>Cervix carcinoma</tissue>
    </source>
</reference>
<reference key="8">
    <citation type="journal article" date="2008" name="Proc. Natl. Acad. Sci. U.S.A.">
        <title>A quantitative atlas of mitotic phosphorylation.</title>
        <authorList>
            <person name="Dephoure N."/>
            <person name="Zhou C."/>
            <person name="Villen J."/>
            <person name="Beausoleil S.A."/>
            <person name="Bakalarski C.E."/>
            <person name="Elledge S.J."/>
            <person name="Gygi S.P."/>
        </authorList>
    </citation>
    <scope>PHOSPHORYLATION [LARGE SCALE ANALYSIS] AT SER-731 AND SER-1587</scope>
    <scope>IDENTIFICATION BY MASS SPECTROMETRY [LARGE SCALE ANALYSIS]</scope>
    <source>
        <tissue>Cervix carcinoma</tissue>
    </source>
</reference>
<reference key="9">
    <citation type="journal article" date="2009" name="Anal. Chem.">
        <title>Lys-N and trypsin cover complementary parts of the phosphoproteome in a refined SCX-based approach.</title>
        <authorList>
            <person name="Gauci S."/>
            <person name="Helbig A.O."/>
            <person name="Slijper M."/>
            <person name="Krijgsveld J."/>
            <person name="Heck A.J."/>
            <person name="Mohammed S."/>
        </authorList>
    </citation>
    <scope>IDENTIFICATION BY MASS SPECTROMETRY [LARGE SCALE ANALYSIS]</scope>
</reference>
<reference key="10">
    <citation type="journal article" date="2009" name="Sci. Signal.">
        <title>Quantitative phosphoproteomic analysis of T cell receptor signaling reveals system-wide modulation of protein-protein interactions.</title>
        <authorList>
            <person name="Mayya V."/>
            <person name="Lundgren D.H."/>
            <person name="Hwang S.-I."/>
            <person name="Rezaul K."/>
            <person name="Wu L."/>
            <person name="Eng J.K."/>
            <person name="Rodionov V."/>
            <person name="Han D.K."/>
        </authorList>
    </citation>
    <scope>PHOSPHORYLATION [LARGE SCALE ANALYSIS] AT SER-1035</scope>
    <scope>IDENTIFICATION BY MASS SPECTROMETRY [LARGE SCALE ANALYSIS]</scope>
    <source>
        <tissue>Leukemic T-cell</tissue>
    </source>
</reference>
<reference key="11">
    <citation type="journal article" date="2010" name="J. Cell Biol.">
        <title>Family-wide characterization of the DENN domain Rab GDP-GTP exchange factors.</title>
        <authorList>
            <person name="Yoshimura S."/>
            <person name="Gerondopoulos A."/>
            <person name="Linford A."/>
            <person name="Rigden D.J."/>
            <person name="Barr F.A."/>
        </authorList>
    </citation>
    <scope>FUNCTION AS GUANYL-NUCLEOTIDE EXCHANGE FACTOR</scope>
</reference>
<reference key="12">
    <citation type="journal article" date="2010" name="Sci. Signal.">
        <title>Quantitative phosphoproteomics reveals widespread full phosphorylation site occupancy during mitosis.</title>
        <authorList>
            <person name="Olsen J.V."/>
            <person name="Vermeulen M."/>
            <person name="Santamaria A."/>
            <person name="Kumar C."/>
            <person name="Miller M.L."/>
            <person name="Jensen L.J."/>
            <person name="Gnad F."/>
            <person name="Cox J."/>
            <person name="Jensen T.S."/>
            <person name="Nigg E.A."/>
            <person name="Brunak S."/>
            <person name="Mann M."/>
        </authorList>
    </citation>
    <scope>IDENTIFICATION BY MASS SPECTROMETRY [LARGE SCALE ANALYSIS]</scope>
    <source>
        <tissue>Cervix carcinoma</tissue>
    </source>
</reference>
<reference key="13">
    <citation type="journal article" date="2011" name="BMC Syst. Biol.">
        <title>Initial characterization of the human central proteome.</title>
        <authorList>
            <person name="Burkard T.R."/>
            <person name="Planyavsky M."/>
            <person name="Kaupe I."/>
            <person name="Breitwieser F.P."/>
            <person name="Buerckstuemmer T."/>
            <person name="Bennett K.L."/>
            <person name="Superti-Furga G."/>
            <person name="Colinge J."/>
        </authorList>
    </citation>
    <scope>IDENTIFICATION BY MASS SPECTROMETRY [LARGE SCALE ANALYSIS]</scope>
</reference>
<reference key="14">
    <citation type="journal article" date="2013" name="J. Proteome Res.">
        <title>Toward a comprehensive characterization of a human cancer cell phosphoproteome.</title>
        <authorList>
            <person name="Zhou H."/>
            <person name="Di Palma S."/>
            <person name="Preisinger C."/>
            <person name="Peng M."/>
            <person name="Polat A.N."/>
            <person name="Heck A.J."/>
            <person name="Mohammed S."/>
        </authorList>
    </citation>
    <scope>PHOSPHORYLATION [LARGE SCALE ANALYSIS] AT SER-731; SER-1015; SER-1035; SER-1099; SER-1151; SER-1152; SER-1225; SER-1240; SER-1251; SER-1281; SER-1508; SER-1587; SER-1589 AND SER-1591</scope>
    <scope>IDENTIFICATION BY MASS SPECTROMETRY [LARGE SCALE ANALYSIS]</scope>
    <source>
        <tissue>Cervix carcinoma</tissue>
        <tissue>Erythroleukemia</tissue>
    </source>
</reference>
<reference key="15">
    <citation type="journal article" date="2014" name="J. Proteomics">
        <title>An enzyme assisted RP-RPLC approach for in-depth analysis of human liver phosphoproteome.</title>
        <authorList>
            <person name="Bian Y."/>
            <person name="Song C."/>
            <person name="Cheng K."/>
            <person name="Dong M."/>
            <person name="Wang F."/>
            <person name="Huang J."/>
            <person name="Sun D."/>
            <person name="Wang L."/>
            <person name="Ye M."/>
            <person name="Zou H."/>
        </authorList>
    </citation>
    <scope>IDENTIFICATION BY MASS SPECTROMETRY [LARGE SCALE ANALYSIS]</scope>
    <source>
        <tissue>Liver</tissue>
    </source>
</reference>
<keyword id="KW-0025">Alternative splicing</keyword>
<keyword id="KW-0238">DNA-binding</keyword>
<keyword id="KW-0344">Guanine-nucleotide releasing factor</keyword>
<keyword id="KW-0539">Nucleus</keyword>
<keyword id="KW-0597">Phosphoprotein</keyword>
<keyword id="KW-1267">Proteomics identification</keyword>
<keyword id="KW-1185">Reference proteome</keyword>
<keyword id="KW-0677">Repeat</keyword>
<keyword id="KW-0804">Transcription</keyword>
<keyword id="KW-0805">Transcription regulation</keyword>
<accession>Q7Z401</accession>
<accession>E7EPL3</accession>
<accession>Q14655</accession>
<accession>Q86T77</accession>
<accession>Q8IVX2</accession>
<accession>Q8NB93</accession>
<proteinExistence type="evidence at protein level"/>
<organism>
    <name type="scientific">Homo sapiens</name>
    <name type="common">Human</name>
    <dbReference type="NCBI Taxonomy" id="9606"/>
    <lineage>
        <taxon>Eukaryota</taxon>
        <taxon>Metazoa</taxon>
        <taxon>Chordata</taxon>
        <taxon>Craniata</taxon>
        <taxon>Vertebrata</taxon>
        <taxon>Euteleostomi</taxon>
        <taxon>Mammalia</taxon>
        <taxon>Eutheria</taxon>
        <taxon>Euarchontoglires</taxon>
        <taxon>Primates</taxon>
        <taxon>Haplorrhini</taxon>
        <taxon>Catarrhini</taxon>
        <taxon>Hominidae</taxon>
        <taxon>Homo</taxon>
    </lineage>
</organism>
<comment type="function">
    <text evidence="7 8">Probable guanine nucleotide exchange factor (GEF) which may activate RAB10. Promotes the exchange of GDP to GTP, converting inactive GDP-bound Rab proteins into their active GTP-bound form. According to PubMed:8056341, it may bind to ISRE-like element (interferon-stimulated response element) of MYC P2 promoter.</text>
</comment>
<comment type="interaction">
    <interactant intactId="EBI-1046479">
        <id>Q7Z401</id>
    </interactant>
    <interactant intactId="EBI-347088">
        <id>P63104</id>
        <label>YWHAZ</label>
    </interactant>
    <organismsDiffer>false</organismsDiffer>
    <experiments>7</experiments>
</comment>
<comment type="subcellular location">
    <subcellularLocation>
        <location evidence="10">Nucleus</location>
    </subcellularLocation>
</comment>
<comment type="alternative products">
    <event type="alternative splicing"/>
    <isoform>
        <id>Q7Z401-1</id>
        <name>1</name>
        <sequence type="displayed"/>
    </isoform>
    <isoform>
        <id>Q7Z401-2</id>
        <name>2</name>
        <sequence type="described" ref="VSP_044630"/>
    </isoform>
</comment>
<comment type="tissue specificity">
    <text evidence="5">Expressed ubiquitously. Highest expression in bone marrow, medium in peripheral blood lymphocytes and lowest in spleen. In brain, breast, and prostate, higher expression was seen in normal cells than in tumor cells. Expression is regulated in a growth- and cell cycle-dependent manner.</text>
</comment>
<comment type="developmental stage">
    <text evidence="5">Highly expressed in fetal liver.</text>
</comment>
<comment type="induction">
    <text evidence="5">By serum in low-passage fibroblasts.</text>
</comment>
<comment type="sequence caution" evidence="10">
    <conflict type="frameshift">
        <sequence resource="EMBL" id="AL833317"/>
    </conflict>
</comment>
<protein>
    <recommendedName>
        <fullName>C-myc promoter-binding protein</fullName>
    </recommendedName>
    <alternativeName>
        <fullName>DENN domain-containing protein 4A</fullName>
    </alternativeName>
</protein>
<sequence>MIEDKGPRVADYFVVAGLTDVSKPLEEEIHFNDACHKVAKPKEPITDVSVIIKSLGEEVPQDYICIDVTPTGLSADLNNGSLVGPQIYLCYRRGRDKPPLTDLGVLYDWKERLKQGCEIIQSTPYGRPANISGSTSSQRIYITYRRASENMTQNTLAVTDICIIIPSKGESPPHTFCKVDKNLNNSMWGSAVYLCYKKSVAKTNTVSYKAGLICRYPQEDYESFSLPESVPLFCLPMGATIECWPSNSKYPLPVFSTFVLTGASAEKVYGAAIQFYEPYSEENLTEKQRLLLGLTSADGKSDSSKTIHTNKCICLLSHWPFFDAFRKFLTFLYRYSISGPHVLPIEKHISHFMHKVPFPSPQRPRILVQLSPHDNLILSQPVSSPLPLSGGKFSTLLQNLGPENAVTLLVFAVTEHKILIHSLRPSVLTSVTEALVSMIFPFHWPCPYVPLCPLALADVLSAPCPFIVGIDSRYFDLYDPPPDVSCVDVDTNTISQIGDKKNVAWKILPKKPCKNLMNTLNNLHQQLAKLQQRPRDDGLMDLAINDYDFNSGKRLHMIDLEIQEAFLFFMASILKGYRSYLRPITQAPSETATDAASLFALQAFLRSRDRSHQKFYNMMTKTQMFIRFIEECSFVSDKDASLAFFDDCVDKVDMDKSGEVRLIELDESFKSEHTVFVTPPEIPHLPNGEEPPLQYSYNGFPVLRNNLFERPEGFLQAKKNKLPSKSSSPNSPLPMFRRTKQEIKSAHKIAKRYSSIPQMWSRCLLRHCYGLWFICLPAYVKVCHSKVRALKTAYDVLKKMQSKKMDPPDEVCYRILMQLCGQYDQPVLAVRVLFEMQKAGIDPNAITYGYYNKAVLESTWPSRSRSGYFLWTKVRNVVLGVTQFKRALKKHAHLSQTTLSGGQSDLGYNSLSKDEVRRGDTSTEDIQEEKDKKGSDCSSLSESESTKGSADCLPKLSYQNSSSIVRLTGTSNNSAGKISGESMESTPELLLISSLEDTNETRNIQSRCFRKRHKSDNETNLQQQVVWGNRNRNLSGGVLMGFMLNRINQEATPGDIVEKLGADAKILSNVISKSTRPNTLDIGKPPLRSKRDSLEKESSDDDTPFDGSNYLADKVDSPVIFDLEDLDSETDVSKAGCVATQNPKRIQRMNSSFSVKPFEKTDVATGFDPLSLLVAETEQQQKEEEEEDEDDSKSISTPSARRDLAEEIVMYMNNMSSPLTSRTPSIDLQRACDDKLNKKSPPLVKACRRSSLPPNSPKPVRLTKSKSYTKSEEKPRDRLWSSPAFSPTCPFREESQDTLTHSSPSFNLDTLLVPKLDVLRNSMFTAGKGVAEKASKWYSRFTMYTTSSKDQSSDRTSLSSVGAQDSESTSLTDEDVCHELEGPISSQETSATSGTKRIDLSRISLESSASLEGSLSKFALPGKSEVTSSFNASNTNIFQNYAMEVLISSCSRCRTCDCLVHDEEIMAGWTADDSNLNTTCPFCGNIFLPFLNIEIRDLRRPGRYFLKSSPSTENMHFPSSISSQTRQSCISTSASGLDTSALSVQGNFDLNSKSKLQENFCTRSIQIPANRSKTAMSKCPIFPMARSISTSGPLDKEDTGRQKLISTGSLPATLQGATDSLGLEWHLPSPDPVTVPYLSPLVVWKELESLLENEGDHAITVADFVDHHPIVFWNLVWYFRRLDLPSNLPGLILSSEHCNKYSKIPRHCMSEDSKYVLIQMLWDNMKLHQDPGQPLYILWNAHTQKYPMVHLLQKSDNSFNQELLKSMVKSIKMNDVYGPMSQILETLNKCPHFKRQRSLYREILFLSLVALGRENIDIDAFDKEYKMAYDRLTPSQVKSTHNCDRPPSTGVMECRKTFGEPYL</sequence>